<comment type="function">
    <text evidence="1">Catalyzes the NADPH-dependent reduction of glyoxylate and hydroxypyruvate into glycolate and glycerate, respectively.</text>
</comment>
<comment type="catalytic activity">
    <reaction evidence="1">
        <text>glycolate + NADP(+) = glyoxylate + NADPH + H(+)</text>
        <dbReference type="Rhea" id="RHEA:10992"/>
        <dbReference type="ChEBI" id="CHEBI:15378"/>
        <dbReference type="ChEBI" id="CHEBI:29805"/>
        <dbReference type="ChEBI" id="CHEBI:36655"/>
        <dbReference type="ChEBI" id="CHEBI:57783"/>
        <dbReference type="ChEBI" id="CHEBI:58349"/>
        <dbReference type="EC" id="1.1.1.79"/>
    </reaction>
</comment>
<comment type="catalytic activity">
    <reaction evidence="1">
        <text>(R)-glycerate + NAD(+) = 3-hydroxypyruvate + NADH + H(+)</text>
        <dbReference type="Rhea" id="RHEA:17905"/>
        <dbReference type="ChEBI" id="CHEBI:15378"/>
        <dbReference type="ChEBI" id="CHEBI:16659"/>
        <dbReference type="ChEBI" id="CHEBI:17180"/>
        <dbReference type="ChEBI" id="CHEBI:57540"/>
        <dbReference type="ChEBI" id="CHEBI:57945"/>
        <dbReference type="EC" id="1.1.1.81"/>
    </reaction>
</comment>
<comment type="catalytic activity">
    <reaction evidence="1">
        <text>(R)-glycerate + NADP(+) = 3-hydroxypyruvate + NADPH + H(+)</text>
        <dbReference type="Rhea" id="RHEA:18657"/>
        <dbReference type="ChEBI" id="CHEBI:15378"/>
        <dbReference type="ChEBI" id="CHEBI:16659"/>
        <dbReference type="ChEBI" id="CHEBI:17180"/>
        <dbReference type="ChEBI" id="CHEBI:57783"/>
        <dbReference type="ChEBI" id="CHEBI:58349"/>
        <dbReference type="EC" id="1.1.1.81"/>
    </reaction>
</comment>
<comment type="subunit">
    <text evidence="1">Homodimer.</text>
</comment>
<comment type="subcellular location">
    <subcellularLocation>
        <location evidence="1">Cytoplasm</location>
    </subcellularLocation>
</comment>
<comment type="similarity">
    <text evidence="1">Belongs to the D-isomer specific 2-hydroxyacid dehydrogenase family. GhrB subfamily.</text>
</comment>
<sequence>MKPSIILYKTLPDDLLHRLEAHFTVTQVPNLHPETVARHAQAFASAQGLLGASETVNRALLEKMPALRAASTISVGYDNVEVDALTARKIVLMHTPAVLTETVADTVMALMLATARRVVDVAERVKAGEWTESIGPAWFGVDVHHKTLGIVGMGRIGMALAQRAHFGFTMPVLYHARRRHQEAEDRFNARYCDLDTLLQEADFVCVILPLTAETRHLFGATQFARMKSSAIFINAGRGPVADENALIAALQNGEIYAAGLDVFEQEPLSVDSPLLNMSNVVAVPHIGSATHETRYNMMACAVDNLIDALQGKIEKNCVNPQAAG</sequence>
<gene>
    <name evidence="1" type="primary">ghrB</name>
    <name type="ordered locus">SG3787</name>
</gene>
<name>GHRB_SALG2</name>
<accession>B5RGN1</accession>
<feature type="chain" id="PRO_1000187297" description="Glyoxylate/hydroxypyruvate reductase B">
    <location>
        <begin position="1"/>
        <end position="324"/>
    </location>
</feature>
<feature type="active site" evidence="1">
    <location>
        <position position="237"/>
    </location>
</feature>
<feature type="active site" evidence="1">
    <location>
        <position position="266"/>
    </location>
</feature>
<feature type="active site" description="Proton donor" evidence="1">
    <location>
        <position position="285"/>
    </location>
</feature>
<organism>
    <name type="scientific">Salmonella gallinarum (strain 287/91 / NCTC 13346)</name>
    <dbReference type="NCBI Taxonomy" id="550538"/>
    <lineage>
        <taxon>Bacteria</taxon>
        <taxon>Pseudomonadati</taxon>
        <taxon>Pseudomonadota</taxon>
        <taxon>Gammaproteobacteria</taxon>
        <taxon>Enterobacterales</taxon>
        <taxon>Enterobacteriaceae</taxon>
        <taxon>Salmonella</taxon>
    </lineage>
</organism>
<proteinExistence type="inferred from homology"/>
<dbReference type="EC" id="1.1.1.79" evidence="1"/>
<dbReference type="EC" id="1.1.1.81" evidence="1"/>
<dbReference type="EMBL" id="AM933173">
    <property type="protein sequence ID" value="CAR39566.1"/>
    <property type="molecule type" value="Genomic_DNA"/>
</dbReference>
<dbReference type="RefSeq" id="WP_000804675.1">
    <property type="nucleotide sequence ID" value="NC_011274.1"/>
</dbReference>
<dbReference type="SMR" id="B5RGN1"/>
<dbReference type="KEGG" id="seg:SG3787"/>
<dbReference type="HOGENOM" id="CLU_019796_1_2_6"/>
<dbReference type="Proteomes" id="UP000008321">
    <property type="component" value="Chromosome"/>
</dbReference>
<dbReference type="GO" id="GO:0005829">
    <property type="term" value="C:cytosol"/>
    <property type="evidence" value="ECO:0007669"/>
    <property type="project" value="TreeGrafter"/>
</dbReference>
<dbReference type="GO" id="GO:0005886">
    <property type="term" value="C:plasma membrane"/>
    <property type="evidence" value="ECO:0007669"/>
    <property type="project" value="UniProtKB-UniRule"/>
</dbReference>
<dbReference type="GO" id="GO:0030267">
    <property type="term" value="F:glyoxylate reductase (NADPH) activity"/>
    <property type="evidence" value="ECO:0007669"/>
    <property type="project" value="UniProtKB-UniRule"/>
</dbReference>
<dbReference type="GO" id="GO:0008465">
    <property type="term" value="F:hydroxypyruvate reductase (NADH) activity"/>
    <property type="evidence" value="ECO:0007669"/>
    <property type="project" value="RHEA"/>
</dbReference>
<dbReference type="GO" id="GO:0120509">
    <property type="term" value="F:hydroxypyruvate reductase (NADPH) activity"/>
    <property type="evidence" value="ECO:0007669"/>
    <property type="project" value="RHEA"/>
</dbReference>
<dbReference type="GO" id="GO:0051287">
    <property type="term" value="F:NAD binding"/>
    <property type="evidence" value="ECO:0007669"/>
    <property type="project" value="InterPro"/>
</dbReference>
<dbReference type="CDD" id="cd05301">
    <property type="entry name" value="GDH"/>
    <property type="match status" value="1"/>
</dbReference>
<dbReference type="FunFam" id="3.40.50.720:FF:000026">
    <property type="entry name" value="Glyoxylate/hydroxypyruvate reductase B"/>
    <property type="match status" value="1"/>
</dbReference>
<dbReference type="Gene3D" id="3.40.50.720">
    <property type="entry name" value="NAD(P)-binding Rossmann-like Domain"/>
    <property type="match status" value="2"/>
</dbReference>
<dbReference type="HAMAP" id="MF_01667">
    <property type="entry name" value="2_Hacid_dh_C_GhrB"/>
    <property type="match status" value="1"/>
</dbReference>
<dbReference type="InterPro" id="IPR050223">
    <property type="entry name" value="D-isomer_2-hydroxyacid_DH"/>
</dbReference>
<dbReference type="InterPro" id="IPR006139">
    <property type="entry name" value="D-isomer_2_OHA_DH_cat_dom"/>
</dbReference>
<dbReference type="InterPro" id="IPR029753">
    <property type="entry name" value="D-isomer_DH_CS"/>
</dbReference>
<dbReference type="InterPro" id="IPR006140">
    <property type="entry name" value="D-isomer_DH_NAD-bd"/>
</dbReference>
<dbReference type="InterPro" id="IPR023756">
    <property type="entry name" value="Glyo/OHPyrv_Rdtase_B"/>
</dbReference>
<dbReference type="InterPro" id="IPR036291">
    <property type="entry name" value="NAD(P)-bd_dom_sf"/>
</dbReference>
<dbReference type="NCBIfam" id="NF011938">
    <property type="entry name" value="PRK15409.1"/>
    <property type="match status" value="1"/>
</dbReference>
<dbReference type="PANTHER" id="PTHR10996">
    <property type="entry name" value="2-HYDROXYACID DEHYDROGENASE-RELATED"/>
    <property type="match status" value="1"/>
</dbReference>
<dbReference type="PANTHER" id="PTHR10996:SF283">
    <property type="entry name" value="GLYOXYLATE_HYDROXYPYRUVATE REDUCTASE B"/>
    <property type="match status" value="1"/>
</dbReference>
<dbReference type="Pfam" id="PF00389">
    <property type="entry name" value="2-Hacid_dh"/>
    <property type="match status" value="1"/>
</dbReference>
<dbReference type="Pfam" id="PF02826">
    <property type="entry name" value="2-Hacid_dh_C"/>
    <property type="match status" value="1"/>
</dbReference>
<dbReference type="SUPFAM" id="SSF52283">
    <property type="entry name" value="Formate/glycerate dehydrogenase catalytic domain-like"/>
    <property type="match status" value="1"/>
</dbReference>
<dbReference type="SUPFAM" id="SSF51735">
    <property type="entry name" value="NAD(P)-binding Rossmann-fold domains"/>
    <property type="match status" value="1"/>
</dbReference>
<dbReference type="PROSITE" id="PS00670">
    <property type="entry name" value="D_2_HYDROXYACID_DH_2"/>
    <property type="match status" value="1"/>
</dbReference>
<keyword id="KW-0963">Cytoplasm</keyword>
<keyword id="KW-0520">NAD</keyword>
<keyword id="KW-0521">NADP</keyword>
<keyword id="KW-0560">Oxidoreductase</keyword>
<protein>
    <recommendedName>
        <fullName evidence="1">Glyoxylate/hydroxypyruvate reductase B</fullName>
        <ecNumber evidence="1">1.1.1.79</ecNumber>
        <ecNumber evidence="1">1.1.1.81</ecNumber>
    </recommendedName>
</protein>
<reference key="1">
    <citation type="journal article" date="2008" name="Genome Res.">
        <title>Comparative genome analysis of Salmonella enteritidis PT4 and Salmonella gallinarum 287/91 provides insights into evolutionary and host adaptation pathways.</title>
        <authorList>
            <person name="Thomson N.R."/>
            <person name="Clayton D.J."/>
            <person name="Windhorst D."/>
            <person name="Vernikos G."/>
            <person name="Davidson S."/>
            <person name="Churcher C."/>
            <person name="Quail M.A."/>
            <person name="Stevens M."/>
            <person name="Jones M.A."/>
            <person name="Watson M."/>
            <person name="Barron A."/>
            <person name="Layton A."/>
            <person name="Pickard D."/>
            <person name="Kingsley R.A."/>
            <person name="Bignell A."/>
            <person name="Clark L."/>
            <person name="Harris B."/>
            <person name="Ormond D."/>
            <person name="Abdellah Z."/>
            <person name="Brooks K."/>
            <person name="Cherevach I."/>
            <person name="Chillingworth T."/>
            <person name="Woodward J."/>
            <person name="Norberczak H."/>
            <person name="Lord A."/>
            <person name="Arrowsmith C."/>
            <person name="Jagels K."/>
            <person name="Moule S."/>
            <person name="Mungall K."/>
            <person name="Saunders M."/>
            <person name="Whitehead S."/>
            <person name="Chabalgoity J.A."/>
            <person name="Maskell D."/>
            <person name="Humphreys T."/>
            <person name="Roberts M."/>
            <person name="Barrow P.A."/>
            <person name="Dougan G."/>
            <person name="Parkhill J."/>
        </authorList>
    </citation>
    <scope>NUCLEOTIDE SEQUENCE [LARGE SCALE GENOMIC DNA]</scope>
    <source>
        <strain>287/91 / NCTC 13346</strain>
    </source>
</reference>
<evidence type="ECO:0000255" key="1">
    <source>
        <dbReference type="HAMAP-Rule" id="MF_01667"/>
    </source>
</evidence>